<evidence type="ECO:0000250" key="1">
    <source>
        <dbReference type="UniProtKB" id="P16848"/>
    </source>
</evidence>
<evidence type="ECO:0000255" key="2"/>
<evidence type="ECO:0000256" key="3">
    <source>
        <dbReference type="SAM" id="MobiDB-lite"/>
    </source>
</evidence>
<evidence type="ECO:0000305" key="4"/>
<name>UL31_HCMVM</name>
<sequence length="595" mass="65790">MGDKPTLVTLLTVAVSSPPPSSPLPLVSFTELLLPPPSVAAAAVAATATSEVGEKTAEQEVAAAGPETRNERRENREDEGGETRTTGTTAVKRSHDGIPRQLAERLRLCRHMDPEQDYRLPAQDVVTSWIEALRDADRDNYGRCVRHAKIHRSASHLTAYESYLVSITEQYNTASNVTEKASYVQGCIFLSFPVIYNNTQGCGYKYDWSNVVTPKAAYAELFFLLCSTSESSVVLQPLITKGGLCSSMAVYDEETMRQSQAVQIGFLHTQLVMVPFVPHACPHYAVPFTTPGKPGCGGAPSGVAGLEETAPFGRVSVTRHGATLLCRVDHLTWISKRVTTYGHKKITRYLAQFRGTMDDDEAALPGEDEAWIASKNVQYEFMGLIFTVNVDSLCVDAEQRQLLGTVATSFCHRVSDKITARNMPRAFSFYLLTSAQRGYDLRFSRNPSLFFSGDALNCPLLNEPNVFSLTVHAPYDIHFGVQPRQTVELDLRYVQITDRCFLVANLPHEDAFYTGLSVWRGGEPLKVTLWTRTRSIVIPQGTPIATLYQITEGDGNVYSYNHHTVFRQMHAAGATTFFLGDMQLPADNFLTSPHP</sequence>
<organism>
    <name type="scientific">Human cytomegalovirus (strain Merlin)</name>
    <name type="common">HHV-5</name>
    <name type="synonym">Human herpesvirus 5</name>
    <dbReference type="NCBI Taxonomy" id="295027"/>
    <lineage>
        <taxon>Viruses</taxon>
        <taxon>Duplodnaviria</taxon>
        <taxon>Heunggongvirae</taxon>
        <taxon>Peploviricota</taxon>
        <taxon>Herviviricetes</taxon>
        <taxon>Herpesvirales</taxon>
        <taxon>Orthoherpesviridae</taxon>
        <taxon>Betaherpesvirinae</taxon>
        <taxon>Cytomegalovirus</taxon>
        <taxon>Cytomegalovirus humanbeta5</taxon>
        <taxon>Human cytomegalovirus</taxon>
    </lineage>
</organism>
<reference key="1">
    <citation type="journal article" date="2004" name="J. Gen. Virol.">
        <title>Genetic content of wild-type human cytomegalovirus.</title>
        <authorList>
            <person name="Dolan A."/>
            <person name="Cunningham C."/>
            <person name="Hector R.D."/>
            <person name="Hassan-Walker A.F."/>
            <person name="Lee L."/>
            <person name="Addison C."/>
            <person name="Dargan D.J."/>
            <person name="McGeoch D.J."/>
            <person name="Gatherer D."/>
            <person name="Emery V.C."/>
            <person name="Griffiths P.D."/>
            <person name="Sinzger C."/>
            <person name="McSharry B.P."/>
            <person name="Wilkinson G.W.G."/>
            <person name="Davison A.J."/>
        </authorList>
    </citation>
    <scope>NUCLEOTIDE SEQUENCE [LARGE SCALE GENOMIC DNA]</scope>
</reference>
<proteinExistence type="inferred from homology"/>
<protein>
    <recommendedName>
        <fullName evidence="1">Protein UL31</fullName>
    </recommendedName>
</protein>
<feature type="signal peptide" evidence="2">
    <location>
        <begin position="1"/>
        <end position="40"/>
    </location>
</feature>
<feature type="chain" id="PRO_0000418283" description="Protein UL31">
    <location>
        <begin position="41"/>
        <end position="595"/>
    </location>
</feature>
<feature type="region of interest" description="Disordered" evidence="3">
    <location>
        <begin position="47"/>
        <end position="94"/>
    </location>
</feature>
<feature type="compositionally biased region" description="Basic and acidic residues" evidence="3">
    <location>
        <begin position="68"/>
        <end position="82"/>
    </location>
</feature>
<accession>Q6SWA0</accession>
<accession>D2K3J9</accession>
<dbReference type="EMBL" id="AY446894">
    <property type="protein sequence ID" value="AAR31596.1"/>
    <property type="molecule type" value="Genomic_DNA"/>
</dbReference>
<dbReference type="RefSeq" id="YP_081490.1">
    <property type="nucleotide sequence ID" value="NC_006273.2"/>
</dbReference>
<dbReference type="DNASU" id="3077508"/>
<dbReference type="GeneID" id="3077508"/>
<dbReference type="KEGG" id="vg:3077508"/>
<dbReference type="Reactome" id="R-HSA-9610379">
    <property type="pathway name" value="HCMV Late Events"/>
</dbReference>
<dbReference type="Proteomes" id="UP000000938">
    <property type="component" value="Segment"/>
</dbReference>
<dbReference type="GO" id="GO:0030430">
    <property type="term" value="C:host cell cytoplasm"/>
    <property type="evidence" value="ECO:0007669"/>
    <property type="project" value="UniProtKB-SubCell"/>
</dbReference>
<dbReference type="GO" id="GO:0042025">
    <property type="term" value="C:host cell nucleus"/>
    <property type="evidence" value="ECO:0007669"/>
    <property type="project" value="UniProtKB-SubCell"/>
</dbReference>
<dbReference type="GO" id="GO:0052170">
    <property type="term" value="P:symbiont-mediated suppression of host innate immune response"/>
    <property type="evidence" value="ECO:0007669"/>
    <property type="project" value="UniProtKB-KW"/>
</dbReference>
<dbReference type="InterPro" id="IPR007578">
    <property type="entry name" value="Herpes_U10"/>
</dbReference>
<dbReference type="Pfam" id="PF04489">
    <property type="entry name" value="DUF570"/>
    <property type="match status" value="1"/>
</dbReference>
<keyword id="KW-1035">Host cytoplasm</keyword>
<keyword id="KW-1048">Host nucleus</keyword>
<keyword id="KW-0945">Host-virus interaction</keyword>
<keyword id="KW-1090">Inhibition of host innate immune response by virus</keyword>
<keyword id="KW-1185">Reference proteome</keyword>
<keyword id="KW-0732">Signal</keyword>
<keyword id="KW-0899">Viral immunoevasion</keyword>
<comment type="function">
    <text evidence="1">Plays a role in the inhibition of host innate immune system by targeting host CGAS and promoting dissociation of DNA from CGAS, thereby inhibiting the enzymatic activity of CGAS.</text>
</comment>
<comment type="subunit">
    <text evidence="1">Interacts with host CGAS.</text>
</comment>
<comment type="subcellular location">
    <subcellularLocation>
        <location evidence="1">Host cytoplasm</location>
    </subcellularLocation>
    <subcellularLocation>
        <location evidence="1">Host nucleus</location>
    </subcellularLocation>
</comment>
<comment type="similarity">
    <text evidence="4">Belongs to the herpesviridae U10 family.</text>
</comment>
<gene>
    <name type="primary">UL31</name>
</gene>
<organismHost>
    <name type="scientific">Homo sapiens</name>
    <name type="common">Human</name>
    <dbReference type="NCBI Taxonomy" id="9606"/>
</organismHost>